<feature type="chain" id="PRO_0000367306" description="Protein maelstrom">
    <location>
        <begin position="1"/>
        <end position="394"/>
    </location>
</feature>
<feature type="DNA-binding region" description="HMG box">
    <location>
        <begin position="2"/>
        <end position="69"/>
    </location>
</feature>
<feature type="region of interest" description="Disordered" evidence="2">
    <location>
        <begin position="44"/>
        <end position="93"/>
    </location>
</feature>
<feature type="compositionally biased region" description="Basic and acidic residues" evidence="2">
    <location>
        <begin position="73"/>
        <end position="93"/>
    </location>
</feature>
<name>MAEL_DROSE</name>
<evidence type="ECO:0000250" key="1"/>
<evidence type="ECO:0000256" key="2">
    <source>
        <dbReference type="SAM" id="MobiDB-lite"/>
    </source>
</evidence>
<evidence type="ECO:0000305" key="3"/>
<reference key="1">
    <citation type="journal article" date="2007" name="Nature">
        <title>Evolution of genes and genomes on the Drosophila phylogeny.</title>
        <authorList>
            <consortium name="Drosophila 12 genomes consortium"/>
        </authorList>
    </citation>
    <scope>NUCLEOTIDE SEQUENCE [LARGE SCALE GENOMIC DNA]</scope>
    <source>
        <strain>Rob3c / Tucson 14021-0248.25</strain>
    </source>
</reference>
<gene>
    <name type="primary">mael</name>
    <name type="ORF">GM22468</name>
</gene>
<keyword id="KW-0963">Cytoplasm</keyword>
<keyword id="KW-0217">Developmental protein</keyword>
<keyword id="KW-0221">Differentiation</keyword>
<keyword id="KW-0238">DNA-binding</keyword>
<keyword id="KW-0469">Meiosis</keyword>
<keyword id="KW-0539">Nucleus</keyword>
<keyword id="KW-0896">Oogenesis</keyword>
<keyword id="KW-1185">Reference proteome</keyword>
<keyword id="KW-0678">Repressor</keyword>
<keyword id="KW-0943">RNA-mediated gene silencing</keyword>
<keyword id="KW-0804">Transcription</keyword>
<keyword id="KW-0805">Transcription regulation</keyword>
<proteinExistence type="inferred from homology"/>
<accession>B4IB36</accession>
<sequence length="394" mass="44375">MAPKKQNGFMMFVNEWRNRNAEGRRMTLAEAVYHCGTIWEKMDTQQRGPYNSDAKDANAARRDKRGSLNGHGQVDKAQREAAESLMDKAQREAAESLMDMKRTTERLVLNAKMSHDLENAKFVFVAFNYFTKALTTDVYVPAEFAACEYSLKEGIRSIYSTMIDPGQIIFGQGSDALHNSSTTHDLPLPPNALGEKNMAKLYHNILDYLTKCQGEGKTPIVFTPAENIGMVKSCFRYLECEDDSRDGSGKIEVFDIQYLLFILKKEVMSVAGLNDEKINKFATDAFFKNDFFEFTAGIACQISSINTRDYHVATLIGLLPAQTINVYLGSTLRSMHEVLSDNDTKLTGYISFLFEVICGVALMFWVLQKARKELSETLLSADYNNEGKHPDVQV</sequence>
<organism>
    <name type="scientific">Drosophila sechellia</name>
    <name type="common">Fruit fly</name>
    <dbReference type="NCBI Taxonomy" id="7238"/>
    <lineage>
        <taxon>Eukaryota</taxon>
        <taxon>Metazoa</taxon>
        <taxon>Ecdysozoa</taxon>
        <taxon>Arthropoda</taxon>
        <taxon>Hexapoda</taxon>
        <taxon>Insecta</taxon>
        <taxon>Pterygota</taxon>
        <taxon>Neoptera</taxon>
        <taxon>Endopterygota</taxon>
        <taxon>Diptera</taxon>
        <taxon>Brachycera</taxon>
        <taxon>Muscomorpha</taxon>
        <taxon>Ephydroidea</taxon>
        <taxon>Drosophilidae</taxon>
        <taxon>Drosophila</taxon>
        <taxon>Sophophora</taxon>
    </lineage>
</organism>
<dbReference type="EMBL" id="CH480826">
    <property type="protein sequence ID" value="EDW44499.1"/>
    <property type="molecule type" value="Genomic_DNA"/>
</dbReference>
<dbReference type="RefSeq" id="XP_002040946.1">
    <property type="nucleotide sequence ID" value="XM_002040910.1"/>
</dbReference>
<dbReference type="SMR" id="B4IB36"/>
<dbReference type="STRING" id="7238.B4IB36"/>
<dbReference type="EnsemblMetazoa" id="FBtr0205453">
    <property type="protein sequence ID" value="FBpp0203945"/>
    <property type="gene ID" value="FBgn0177338"/>
</dbReference>
<dbReference type="HOGENOM" id="CLU_044134_1_0_1"/>
<dbReference type="OMA" id="PAENIGM"/>
<dbReference type="PhylomeDB" id="B4IB36"/>
<dbReference type="Proteomes" id="UP000001292">
    <property type="component" value="Unassembled WGS sequence"/>
</dbReference>
<dbReference type="GO" id="GO:0005737">
    <property type="term" value="C:cytoplasm"/>
    <property type="evidence" value="ECO:0000250"/>
    <property type="project" value="UniProtKB"/>
</dbReference>
<dbReference type="GO" id="GO:0005634">
    <property type="term" value="C:nucleus"/>
    <property type="evidence" value="ECO:0000250"/>
    <property type="project" value="UniProtKB"/>
</dbReference>
<dbReference type="GO" id="GO:0043186">
    <property type="term" value="C:P granule"/>
    <property type="evidence" value="ECO:0000250"/>
    <property type="project" value="UniProtKB"/>
</dbReference>
<dbReference type="GO" id="GO:0048471">
    <property type="term" value="C:perinuclear region of cytoplasm"/>
    <property type="evidence" value="ECO:0000250"/>
    <property type="project" value="UniProtKB"/>
</dbReference>
<dbReference type="GO" id="GO:0000976">
    <property type="term" value="F:transcription cis-regulatory region binding"/>
    <property type="evidence" value="ECO:0000250"/>
    <property type="project" value="UniProtKB"/>
</dbReference>
<dbReference type="GO" id="GO:0030718">
    <property type="term" value="P:germ-line stem cell population maintenance"/>
    <property type="evidence" value="ECO:0000250"/>
    <property type="project" value="UniProtKB"/>
</dbReference>
<dbReference type="GO" id="GO:0007140">
    <property type="term" value="P:male meiotic nuclear division"/>
    <property type="evidence" value="ECO:0007669"/>
    <property type="project" value="TreeGrafter"/>
</dbReference>
<dbReference type="GO" id="GO:0045892">
    <property type="term" value="P:negative regulation of DNA-templated transcription"/>
    <property type="evidence" value="ECO:0000250"/>
    <property type="project" value="UniProtKB"/>
</dbReference>
<dbReference type="GO" id="GO:0048477">
    <property type="term" value="P:oogenesis"/>
    <property type="evidence" value="ECO:0007669"/>
    <property type="project" value="UniProtKB-KW"/>
</dbReference>
<dbReference type="GO" id="GO:0034587">
    <property type="term" value="P:piRNA processing"/>
    <property type="evidence" value="ECO:0000250"/>
    <property type="project" value="UniProtKB"/>
</dbReference>
<dbReference type="GO" id="GO:0060964">
    <property type="term" value="P:regulation of miRNA-mediated gene silencing"/>
    <property type="evidence" value="ECO:0007669"/>
    <property type="project" value="InterPro"/>
</dbReference>
<dbReference type="GO" id="GO:0031047">
    <property type="term" value="P:regulatory ncRNA-mediated gene silencing"/>
    <property type="evidence" value="ECO:0000250"/>
    <property type="project" value="UniProtKB"/>
</dbReference>
<dbReference type="GO" id="GO:0007283">
    <property type="term" value="P:spermatogenesis"/>
    <property type="evidence" value="ECO:0000250"/>
    <property type="project" value="UniProtKB"/>
</dbReference>
<dbReference type="FunFam" id="1.10.30.10:FF:000057">
    <property type="entry name" value="Protein maelstrom 2"/>
    <property type="match status" value="1"/>
</dbReference>
<dbReference type="Gene3D" id="1.10.30.10">
    <property type="entry name" value="High mobility group box domain"/>
    <property type="match status" value="1"/>
</dbReference>
<dbReference type="InterPro" id="IPR036910">
    <property type="entry name" value="HMG_box_dom_sf"/>
</dbReference>
<dbReference type="InterPro" id="IPR024970">
    <property type="entry name" value="Maelstrom"/>
</dbReference>
<dbReference type="InterPro" id="IPR039259">
    <property type="entry name" value="Protein_maelstrom"/>
</dbReference>
<dbReference type="PANTHER" id="PTHR21358">
    <property type="entry name" value="PROTEIN MAELSTROM HOMOLOG"/>
    <property type="match status" value="1"/>
</dbReference>
<dbReference type="PANTHER" id="PTHR21358:SF4">
    <property type="entry name" value="PROTEIN MAELSTROM HOMOLOG"/>
    <property type="match status" value="1"/>
</dbReference>
<dbReference type="Pfam" id="PF13017">
    <property type="entry name" value="Maelstrom"/>
    <property type="match status" value="1"/>
</dbReference>
<dbReference type="SUPFAM" id="SSF47095">
    <property type="entry name" value="HMG-box"/>
    <property type="match status" value="1"/>
</dbReference>
<comment type="function">
    <text evidence="1">Involved both in the piRNA and miRNA metabolic processes. As a component of the meiotic nuage, plays a central role during oogenesis by repressing transposable elements and preventing their mobilization, which is essential for the germline integrity. Repression of transposable elements is mediated via the piRNA metabolic process, which mediates the repression of transposable elements during meiosis by forming complexes composed of piRNAs and Piwi proteins and governs the repression of transposons. As a nuclear component, it is required for proper differentiation in the germline stem cell (GSC) lineage by repressing microRNA-7 (miR-7), thereby acting as an indirect regulator of bag-of-marbles (Bam). Acts by binding to the promoter of miR-7 gene and repressing its expression; miR-7 repression alleviates the Bam repression by miR-7, thereby allowing differentiation in the germline stem cell (GSC) lineage (By similarity).</text>
</comment>
<comment type="subcellular location">
    <subcellularLocation>
        <location>Cytoplasm</location>
    </subcellularLocation>
    <subcellularLocation>
        <location>Nucleus</location>
    </subcellularLocation>
    <text evidence="1">Component of the meiotic nuage, also named P granule, a germ-cell-specific organelle required to repress transposon activity during meiosis.</text>
</comment>
<comment type="similarity">
    <text evidence="3">Belongs to the maelstrom family.</text>
</comment>
<protein>
    <recommendedName>
        <fullName>Protein maelstrom</fullName>
    </recommendedName>
</protein>